<comment type="function">
    <text evidence="1">Binds 23S rRNA and is also seen to make contacts with the A and possibly P site tRNAs.</text>
</comment>
<comment type="subunit">
    <text evidence="1">Part of the 50S ribosomal subunit.</text>
</comment>
<comment type="similarity">
    <text evidence="1">Belongs to the universal ribosomal protein uL16 family.</text>
</comment>
<evidence type="ECO:0000255" key="1">
    <source>
        <dbReference type="HAMAP-Rule" id="MF_01342"/>
    </source>
</evidence>
<evidence type="ECO:0000305" key="2"/>
<proteinExistence type="inferred from homology"/>
<gene>
    <name evidence="1" type="primary">rplP</name>
    <name type="ordered locus">ACP_1444</name>
</gene>
<keyword id="KW-1185">Reference proteome</keyword>
<keyword id="KW-0687">Ribonucleoprotein</keyword>
<keyword id="KW-0689">Ribosomal protein</keyword>
<keyword id="KW-0694">RNA-binding</keyword>
<keyword id="KW-0699">rRNA-binding</keyword>
<keyword id="KW-0820">tRNA-binding</keyword>
<accession>C1F635</accession>
<protein>
    <recommendedName>
        <fullName evidence="1">Large ribosomal subunit protein uL16</fullName>
    </recommendedName>
    <alternativeName>
        <fullName evidence="2">50S ribosomal protein L16</fullName>
    </alternativeName>
</protein>
<sequence length="144" mass="16493">MLMPKKVKYRKQQRGRMRGKAWRGSELSFGDYGLKVMECGYITDRQIEASRIAMTRFIKRGGKIWLRLFPDKPITKKPAETRMGKGKGAPDHWVAVVRPGKVLFEMEGVSPEMAQEAMRLAANKLPLKTRFVMRHDVKTTVAAK</sequence>
<organism>
    <name type="scientific">Acidobacterium capsulatum (strain ATCC 51196 / DSM 11244 / BCRC 80197 / JCM 7670 / NBRC 15755 / NCIMB 13165 / 161)</name>
    <dbReference type="NCBI Taxonomy" id="240015"/>
    <lineage>
        <taxon>Bacteria</taxon>
        <taxon>Pseudomonadati</taxon>
        <taxon>Acidobacteriota</taxon>
        <taxon>Terriglobia</taxon>
        <taxon>Terriglobales</taxon>
        <taxon>Acidobacteriaceae</taxon>
        <taxon>Acidobacterium</taxon>
    </lineage>
</organism>
<reference key="1">
    <citation type="journal article" date="2009" name="Appl. Environ. Microbiol.">
        <title>Three genomes from the phylum Acidobacteria provide insight into the lifestyles of these microorganisms in soils.</title>
        <authorList>
            <person name="Ward N.L."/>
            <person name="Challacombe J.F."/>
            <person name="Janssen P.H."/>
            <person name="Henrissat B."/>
            <person name="Coutinho P.M."/>
            <person name="Wu M."/>
            <person name="Xie G."/>
            <person name="Haft D.H."/>
            <person name="Sait M."/>
            <person name="Badger J."/>
            <person name="Barabote R.D."/>
            <person name="Bradley B."/>
            <person name="Brettin T.S."/>
            <person name="Brinkac L.M."/>
            <person name="Bruce D."/>
            <person name="Creasy T."/>
            <person name="Daugherty S.C."/>
            <person name="Davidsen T.M."/>
            <person name="DeBoy R.T."/>
            <person name="Detter J.C."/>
            <person name="Dodson R.J."/>
            <person name="Durkin A.S."/>
            <person name="Ganapathy A."/>
            <person name="Gwinn-Giglio M."/>
            <person name="Han C.S."/>
            <person name="Khouri H."/>
            <person name="Kiss H."/>
            <person name="Kothari S.P."/>
            <person name="Madupu R."/>
            <person name="Nelson K.E."/>
            <person name="Nelson W.C."/>
            <person name="Paulsen I."/>
            <person name="Penn K."/>
            <person name="Ren Q."/>
            <person name="Rosovitz M.J."/>
            <person name="Selengut J.D."/>
            <person name="Shrivastava S."/>
            <person name="Sullivan S.A."/>
            <person name="Tapia R."/>
            <person name="Thompson L.S."/>
            <person name="Watkins K.L."/>
            <person name="Yang Q."/>
            <person name="Yu C."/>
            <person name="Zafar N."/>
            <person name="Zhou L."/>
            <person name="Kuske C.R."/>
        </authorList>
    </citation>
    <scope>NUCLEOTIDE SEQUENCE [LARGE SCALE GENOMIC DNA]</scope>
    <source>
        <strain>ATCC 51196 / DSM 11244 / BCRC 80197 / JCM 7670 / NBRC 15755 / NCIMB 13165 / 161</strain>
    </source>
</reference>
<dbReference type="EMBL" id="CP001472">
    <property type="protein sequence ID" value="ACO33657.1"/>
    <property type="molecule type" value="Genomic_DNA"/>
</dbReference>
<dbReference type="RefSeq" id="WP_015896577.1">
    <property type="nucleotide sequence ID" value="NC_012483.1"/>
</dbReference>
<dbReference type="SMR" id="C1F635"/>
<dbReference type="FunCoup" id="C1F635">
    <property type="interactions" value="551"/>
</dbReference>
<dbReference type="STRING" id="240015.ACP_1444"/>
<dbReference type="KEGG" id="aca:ACP_1444"/>
<dbReference type="eggNOG" id="COG0197">
    <property type="taxonomic scope" value="Bacteria"/>
</dbReference>
<dbReference type="HOGENOM" id="CLU_078858_2_1_0"/>
<dbReference type="InParanoid" id="C1F635"/>
<dbReference type="OrthoDB" id="9802589at2"/>
<dbReference type="Proteomes" id="UP000002207">
    <property type="component" value="Chromosome"/>
</dbReference>
<dbReference type="GO" id="GO:0022625">
    <property type="term" value="C:cytosolic large ribosomal subunit"/>
    <property type="evidence" value="ECO:0007669"/>
    <property type="project" value="TreeGrafter"/>
</dbReference>
<dbReference type="GO" id="GO:0019843">
    <property type="term" value="F:rRNA binding"/>
    <property type="evidence" value="ECO:0007669"/>
    <property type="project" value="UniProtKB-UniRule"/>
</dbReference>
<dbReference type="GO" id="GO:0003735">
    <property type="term" value="F:structural constituent of ribosome"/>
    <property type="evidence" value="ECO:0007669"/>
    <property type="project" value="InterPro"/>
</dbReference>
<dbReference type="GO" id="GO:0000049">
    <property type="term" value="F:tRNA binding"/>
    <property type="evidence" value="ECO:0007669"/>
    <property type="project" value="UniProtKB-KW"/>
</dbReference>
<dbReference type="GO" id="GO:0006412">
    <property type="term" value="P:translation"/>
    <property type="evidence" value="ECO:0007669"/>
    <property type="project" value="UniProtKB-UniRule"/>
</dbReference>
<dbReference type="CDD" id="cd01433">
    <property type="entry name" value="Ribosomal_L16_L10e"/>
    <property type="match status" value="1"/>
</dbReference>
<dbReference type="FunFam" id="3.90.1170.10:FF:000001">
    <property type="entry name" value="50S ribosomal protein L16"/>
    <property type="match status" value="1"/>
</dbReference>
<dbReference type="Gene3D" id="3.90.1170.10">
    <property type="entry name" value="Ribosomal protein L10e/L16"/>
    <property type="match status" value="1"/>
</dbReference>
<dbReference type="HAMAP" id="MF_01342">
    <property type="entry name" value="Ribosomal_uL16"/>
    <property type="match status" value="1"/>
</dbReference>
<dbReference type="InterPro" id="IPR047873">
    <property type="entry name" value="Ribosomal_uL16"/>
</dbReference>
<dbReference type="InterPro" id="IPR000114">
    <property type="entry name" value="Ribosomal_uL16_bact-type"/>
</dbReference>
<dbReference type="InterPro" id="IPR020798">
    <property type="entry name" value="Ribosomal_uL16_CS"/>
</dbReference>
<dbReference type="InterPro" id="IPR016180">
    <property type="entry name" value="Ribosomal_uL16_dom"/>
</dbReference>
<dbReference type="InterPro" id="IPR036920">
    <property type="entry name" value="Ribosomal_uL16_sf"/>
</dbReference>
<dbReference type="NCBIfam" id="TIGR01164">
    <property type="entry name" value="rplP_bact"/>
    <property type="match status" value="1"/>
</dbReference>
<dbReference type="PANTHER" id="PTHR12220">
    <property type="entry name" value="50S/60S RIBOSOMAL PROTEIN L16"/>
    <property type="match status" value="1"/>
</dbReference>
<dbReference type="PANTHER" id="PTHR12220:SF13">
    <property type="entry name" value="LARGE RIBOSOMAL SUBUNIT PROTEIN UL16M"/>
    <property type="match status" value="1"/>
</dbReference>
<dbReference type="Pfam" id="PF00252">
    <property type="entry name" value="Ribosomal_L16"/>
    <property type="match status" value="1"/>
</dbReference>
<dbReference type="PRINTS" id="PR00060">
    <property type="entry name" value="RIBOSOMALL16"/>
</dbReference>
<dbReference type="SUPFAM" id="SSF54686">
    <property type="entry name" value="Ribosomal protein L16p/L10e"/>
    <property type="match status" value="1"/>
</dbReference>
<dbReference type="PROSITE" id="PS00586">
    <property type="entry name" value="RIBOSOMAL_L16_1"/>
    <property type="match status" value="1"/>
</dbReference>
<dbReference type="PROSITE" id="PS00701">
    <property type="entry name" value="RIBOSOMAL_L16_2"/>
    <property type="match status" value="1"/>
</dbReference>
<name>RL16_ACIC5</name>
<feature type="chain" id="PRO_1000166327" description="Large ribosomal subunit protein uL16">
    <location>
        <begin position="1"/>
        <end position="144"/>
    </location>
</feature>